<gene>
    <name evidence="2" type="primary">tuf</name>
    <name type="ordered locus">cgR_0598</name>
</gene>
<reference key="1">
    <citation type="journal article" date="2007" name="Microbiology">
        <title>Comparative analysis of the Corynebacterium glutamicum group and complete genome sequence of strain R.</title>
        <authorList>
            <person name="Yukawa H."/>
            <person name="Omumasaba C.A."/>
            <person name="Nonaka H."/>
            <person name="Kos P."/>
            <person name="Okai N."/>
            <person name="Suzuki N."/>
            <person name="Suda M."/>
            <person name="Tsuge Y."/>
            <person name="Watanabe J."/>
            <person name="Ikeda Y."/>
            <person name="Vertes A.A."/>
            <person name="Inui M."/>
        </authorList>
    </citation>
    <scope>NUCLEOTIDE SEQUENCE [LARGE SCALE GENOMIC DNA]</scope>
    <source>
        <strain>R</strain>
    </source>
</reference>
<proteinExistence type="inferred from homology"/>
<dbReference type="EC" id="3.6.5.3" evidence="2"/>
<dbReference type="EMBL" id="AP009044">
    <property type="protein sequence ID" value="BAF53567.1"/>
    <property type="molecule type" value="Genomic_DNA"/>
</dbReference>
<dbReference type="RefSeq" id="WP_003854225.1">
    <property type="nucleotide sequence ID" value="NC_009342.1"/>
</dbReference>
<dbReference type="SMR" id="A4QBH0"/>
<dbReference type="KEGG" id="cgt:cgR_0598"/>
<dbReference type="HOGENOM" id="CLU_007265_0_1_11"/>
<dbReference type="PhylomeDB" id="A4QBH0"/>
<dbReference type="Proteomes" id="UP000006698">
    <property type="component" value="Chromosome"/>
</dbReference>
<dbReference type="GO" id="GO:0005829">
    <property type="term" value="C:cytosol"/>
    <property type="evidence" value="ECO:0007669"/>
    <property type="project" value="TreeGrafter"/>
</dbReference>
<dbReference type="GO" id="GO:0005525">
    <property type="term" value="F:GTP binding"/>
    <property type="evidence" value="ECO:0007669"/>
    <property type="project" value="UniProtKB-UniRule"/>
</dbReference>
<dbReference type="GO" id="GO:0003924">
    <property type="term" value="F:GTPase activity"/>
    <property type="evidence" value="ECO:0007669"/>
    <property type="project" value="InterPro"/>
</dbReference>
<dbReference type="GO" id="GO:0003746">
    <property type="term" value="F:translation elongation factor activity"/>
    <property type="evidence" value="ECO:0007669"/>
    <property type="project" value="UniProtKB-UniRule"/>
</dbReference>
<dbReference type="CDD" id="cd01884">
    <property type="entry name" value="EF_Tu"/>
    <property type="match status" value="1"/>
</dbReference>
<dbReference type="CDD" id="cd03697">
    <property type="entry name" value="EFTU_II"/>
    <property type="match status" value="1"/>
</dbReference>
<dbReference type="CDD" id="cd03707">
    <property type="entry name" value="EFTU_III"/>
    <property type="match status" value="1"/>
</dbReference>
<dbReference type="FunFam" id="2.40.30.10:FF:000001">
    <property type="entry name" value="Elongation factor Tu"/>
    <property type="match status" value="1"/>
</dbReference>
<dbReference type="FunFam" id="3.40.50.300:FF:000003">
    <property type="entry name" value="Elongation factor Tu"/>
    <property type="match status" value="1"/>
</dbReference>
<dbReference type="Gene3D" id="3.40.50.300">
    <property type="entry name" value="P-loop containing nucleotide triphosphate hydrolases"/>
    <property type="match status" value="1"/>
</dbReference>
<dbReference type="Gene3D" id="2.40.30.10">
    <property type="entry name" value="Translation factors"/>
    <property type="match status" value="2"/>
</dbReference>
<dbReference type="HAMAP" id="MF_00118_B">
    <property type="entry name" value="EF_Tu_B"/>
    <property type="match status" value="1"/>
</dbReference>
<dbReference type="InterPro" id="IPR041709">
    <property type="entry name" value="EF-Tu_GTP-bd"/>
</dbReference>
<dbReference type="InterPro" id="IPR050055">
    <property type="entry name" value="EF-Tu_GTPase"/>
</dbReference>
<dbReference type="InterPro" id="IPR004161">
    <property type="entry name" value="EFTu-like_2"/>
</dbReference>
<dbReference type="InterPro" id="IPR033720">
    <property type="entry name" value="EFTU_2"/>
</dbReference>
<dbReference type="InterPro" id="IPR031157">
    <property type="entry name" value="G_TR_CS"/>
</dbReference>
<dbReference type="InterPro" id="IPR027417">
    <property type="entry name" value="P-loop_NTPase"/>
</dbReference>
<dbReference type="InterPro" id="IPR005225">
    <property type="entry name" value="Small_GTP-bd"/>
</dbReference>
<dbReference type="InterPro" id="IPR000795">
    <property type="entry name" value="T_Tr_GTP-bd_dom"/>
</dbReference>
<dbReference type="InterPro" id="IPR009000">
    <property type="entry name" value="Transl_B-barrel_sf"/>
</dbReference>
<dbReference type="InterPro" id="IPR009001">
    <property type="entry name" value="Transl_elong_EF1A/Init_IF2_C"/>
</dbReference>
<dbReference type="InterPro" id="IPR004541">
    <property type="entry name" value="Transl_elong_EFTu/EF1A_bac/org"/>
</dbReference>
<dbReference type="InterPro" id="IPR004160">
    <property type="entry name" value="Transl_elong_EFTu/EF1A_C"/>
</dbReference>
<dbReference type="NCBIfam" id="TIGR00485">
    <property type="entry name" value="EF-Tu"/>
    <property type="match status" value="1"/>
</dbReference>
<dbReference type="NCBIfam" id="NF000766">
    <property type="entry name" value="PRK00049.1"/>
    <property type="match status" value="1"/>
</dbReference>
<dbReference type="NCBIfam" id="NF009372">
    <property type="entry name" value="PRK12735.1"/>
    <property type="match status" value="1"/>
</dbReference>
<dbReference type="NCBIfam" id="NF009373">
    <property type="entry name" value="PRK12736.1"/>
    <property type="match status" value="1"/>
</dbReference>
<dbReference type="NCBIfam" id="TIGR00231">
    <property type="entry name" value="small_GTP"/>
    <property type="match status" value="1"/>
</dbReference>
<dbReference type="PANTHER" id="PTHR43721:SF22">
    <property type="entry name" value="ELONGATION FACTOR TU, MITOCHONDRIAL"/>
    <property type="match status" value="1"/>
</dbReference>
<dbReference type="PANTHER" id="PTHR43721">
    <property type="entry name" value="ELONGATION FACTOR TU-RELATED"/>
    <property type="match status" value="1"/>
</dbReference>
<dbReference type="Pfam" id="PF00009">
    <property type="entry name" value="GTP_EFTU"/>
    <property type="match status" value="1"/>
</dbReference>
<dbReference type="Pfam" id="PF03144">
    <property type="entry name" value="GTP_EFTU_D2"/>
    <property type="match status" value="1"/>
</dbReference>
<dbReference type="Pfam" id="PF03143">
    <property type="entry name" value="GTP_EFTU_D3"/>
    <property type="match status" value="1"/>
</dbReference>
<dbReference type="PRINTS" id="PR00315">
    <property type="entry name" value="ELONGATNFCT"/>
</dbReference>
<dbReference type="SUPFAM" id="SSF50465">
    <property type="entry name" value="EF-Tu/eEF-1alpha/eIF2-gamma C-terminal domain"/>
    <property type="match status" value="1"/>
</dbReference>
<dbReference type="SUPFAM" id="SSF52540">
    <property type="entry name" value="P-loop containing nucleoside triphosphate hydrolases"/>
    <property type="match status" value="1"/>
</dbReference>
<dbReference type="SUPFAM" id="SSF50447">
    <property type="entry name" value="Translation proteins"/>
    <property type="match status" value="1"/>
</dbReference>
<dbReference type="PROSITE" id="PS00301">
    <property type="entry name" value="G_TR_1"/>
    <property type="match status" value="1"/>
</dbReference>
<dbReference type="PROSITE" id="PS51722">
    <property type="entry name" value="G_TR_2"/>
    <property type="match status" value="1"/>
</dbReference>
<name>EFTU_CORGB</name>
<comment type="function">
    <text evidence="2">GTP hydrolase that promotes the GTP-dependent binding of aminoacyl-tRNA to the A-site of ribosomes during protein biosynthesis.</text>
</comment>
<comment type="catalytic activity">
    <reaction evidence="2">
        <text>GTP + H2O = GDP + phosphate + H(+)</text>
        <dbReference type="Rhea" id="RHEA:19669"/>
        <dbReference type="ChEBI" id="CHEBI:15377"/>
        <dbReference type="ChEBI" id="CHEBI:15378"/>
        <dbReference type="ChEBI" id="CHEBI:37565"/>
        <dbReference type="ChEBI" id="CHEBI:43474"/>
        <dbReference type="ChEBI" id="CHEBI:58189"/>
        <dbReference type="EC" id="3.6.5.3"/>
    </reaction>
    <physiologicalReaction direction="left-to-right" evidence="2">
        <dbReference type="Rhea" id="RHEA:19670"/>
    </physiologicalReaction>
</comment>
<comment type="subunit">
    <text evidence="2">Monomer.</text>
</comment>
<comment type="subcellular location">
    <subcellularLocation>
        <location evidence="2">Cytoplasm</location>
    </subcellularLocation>
</comment>
<comment type="similarity">
    <text evidence="2">Belongs to the TRAFAC class translation factor GTPase superfamily. Classic translation factor GTPase family. EF-Tu/EF-1A subfamily.</text>
</comment>
<organism>
    <name type="scientific">Corynebacterium glutamicum (strain R)</name>
    <dbReference type="NCBI Taxonomy" id="340322"/>
    <lineage>
        <taxon>Bacteria</taxon>
        <taxon>Bacillati</taxon>
        <taxon>Actinomycetota</taxon>
        <taxon>Actinomycetes</taxon>
        <taxon>Mycobacteriales</taxon>
        <taxon>Corynebacteriaceae</taxon>
        <taxon>Corynebacterium</taxon>
    </lineage>
</organism>
<sequence length="396" mass="43822">MAKAKFERTKPHVNIGTIGHVDHGKTTTTAAITKVLADAYPELNEAFAFDSIDKAPEEKERGITINISHVEYQTEKRHYAHVDAPGHADYIKNMITGAAQMDGAILVVAATDGPMPQTREHVLLARQVGVPYILVALNKCDMVEDEEIIELVEMEVRELLAEQDYDEEAPIVHISALKALEGDEKWGKQILELMQACDDNIPDPVRETDKPFLMPIEDIFTITGRGTVVTGRVERGTLNVNDDVDIIGIKEKSTSTTVTGIEMFRKLLDSAEAGDNCGLLLRGIKREDVERGQVIVKPGAYTPHTEFEGSVYVLSKDEGGRHTPFFDNYRPQFYFRTTDVTGVVKLPEGTEMVMPGDNVDMSVTLIQPVAMDEGLRFAIREGSRTVGAGRVTKIIK</sequence>
<accession>A4QBH0</accession>
<protein>
    <recommendedName>
        <fullName evidence="2">Elongation factor Tu</fullName>
        <shortName evidence="2">EF-Tu</shortName>
        <ecNumber evidence="2">3.6.5.3</ecNumber>
    </recommendedName>
</protein>
<evidence type="ECO:0000250" key="1"/>
<evidence type="ECO:0000255" key="2">
    <source>
        <dbReference type="HAMAP-Rule" id="MF_00118"/>
    </source>
</evidence>
<feature type="chain" id="PRO_1000015643" description="Elongation factor Tu">
    <location>
        <begin position="1"/>
        <end position="396"/>
    </location>
</feature>
<feature type="domain" description="tr-type G">
    <location>
        <begin position="10"/>
        <end position="205"/>
    </location>
</feature>
<feature type="region of interest" description="G1" evidence="1">
    <location>
        <begin position="19"/>
        <end position="26"/>
    </location>
</feature>
<feature type="region of interest" description="G2" evidence="1">
    <location>
        <begin position="62"/>
        <end position="66"/>
    </location>
</feature>
<feature type="region of interest" description="G3" evidence="1">
    <location>
        <begin position="83"/>
        <end position="86"/>
    </location>
</feature>
<feature type="region of interest" description="G4" evidence="1">
    <location>
        <begin position="138"/>
        <end position="141"/>
    </location>
</feature>
<feature type="region of interest" description="G5" evidence="1">
    <location>
        <begin position="175"/>
        <end position="177"/>
    </location>
</feature>
<feature type="binding site" evidence="2">
    <location>
        <begin position="19"/>
        <end position="26"/>
    </location>
    <ligand>
        <name>GTP</name>
        <dbReference type="ChEBI" id="CHEBI:37565"/>
    </ligand>
</feature>
<feature type="binding site" evidence="2">
    <location>
        <position position="26"/>
    </location>
    <ligand>
        <name>Mg(2+)</name>
        <dbReference type="ChEBI" id="CHEBI:18420"/>
    </ligand>
</feature>
<feature type="binding site" evidence="2">
    <location>
        <begin position="83"/>
        <end position="87"/>
    </location>
    <ligand>
        <name>GTP</name>
        <dbReference type="ChEBI" id="CHEBI:37565"/>
    </ligand>
</feature>
<feature type="binding site" evidence="2">
    <location>
        <begin position="138"/>
        <end position="141"/>
    </location>
    <ligand>
        <name>GTP</name>
        <dbReference type="ChEBI" id="CHEBI:37565"/>
    </ligand>
</feature>
<keyword id="KW-0963">Cytoplasm</keyword>
<keyword id="KW-0251">Elongation factor</keyword>
<keyword id="KW-0342">GTP-binding</keyword>
<keyword id="KW-0378">Hydrolase</keyword>
<keyword id="KW-0460">Magnesium</keyword>
<keyword id="KW-0479">Metal-binding</keyword>
<keyword id="KW-0547">Nucleotide-binding</keyword>
<keyword id="KW-0648">Protein biosynthesis</keyword>